<evidence type="ECO:0000255" key="1">
    <source>
        <dbReference type="HAMAP-Rule" id="MF_00690"/>
    </source>
</evidence>
<evidence type="ECO:0007829" key="2">
    <source>
        <dbReference type="PDB" id="1Y0N"/>
    </source>
</evidence>
<name>Y3463_PSEAE</name>
<reference key="1">
    <citation type="journal article" date="2000" name="Nature">
        <title>Complete genome sequence of Pseudomonas aeruginosa PAO1, an opportunistic pathogen.</title>
        <authorList>
            <person name="Stover C.K."/>
            <person name="Pham X.-Q.T."/>
            <person name="Erwin A.L."/>
            <person name="Mizoguchi S.D."/>
            <person name="Warrener P."/>
            <person name="Hickey M.J."/>
            <person name="Brinkman F.S.L."/>
            <person name="Hufnagle W.O."/>
            <person name="Kowalik D.J."/>
            <person name="Lagrou M."/>
            <person name="Garber R.L."/>
            <person name="Goltry L."/>
            <person name="Tolentino E."/>
            <person name="Westbrock-Wadman S."/>
            <person name="Yuan Y."/>
            <person name="Brody L.L."/>
            <person name="Coulter S.N."/>
            <person name="Folger K.R."/>
            <person name="Kas A."/>
            <person name="Larbig K."/>
            <person name="Lim R.M."/>
            <person name="Smith K.A."/>
            <person name="Spencer D.H."/>
            <person name="Wong G.K.-S."/>
            <person name="Wu Z."/>
            <person name="Paulsen I.T."/>
            <person name="Reizer J."/>
            <person name="Saier M.H. Jr."/>
            <person name="Hancock R.E.W."/>
            <person name="Lory S."/>
            <person name="Olson M.V."/>
        </authorList>
    </citation>
    <scope>NUCLEOTIDE SEQUENCE [LARGE SCALE GENOMIC DNA]</scope>
    <source>
        <strain>ATCC 15692 / DSM 22644 / CIP 104116 / JCM 14847 / LMG 12228 / 1C / PRS 101 / PAO1</strain>
    </source>
</reference>
<organism>
    <name type="scientific">Pseudomonas aeruginosa (strain ATCC 15692 / DSM 22644 / CIP 104116 / JCM 14847 / LMG 12228 / 1C / PRS 101 / PAO1)</name>
    <dbReference type="NCBI Taxonomy" id="208964"/>
    <lineage>
        <taxon>Bacteria</taxon>
        <taxon>Pseudomonadati</taxon>
        <taxon>Pseudomonadota</taxon>
        <taxon>Gammaproteobacteria</taxon>
        <taxon>Pseudomonadales</taxon>
        <taxon>Pseudomonadaceae</taxon>
        <taxon>Pseudomonas</taxon>
    </lineage>
</organism>
<dbReference type="EMBL" id="AE004091">
    <property type="protein sequence ID" value="AAG06851.1"/>
    <property type="molecule type" value="Genomic_DNA"/>
</dbReference>
<dbReference type="PIR" id="F83212">
    <property type="entry name" value="F83212"/>
</dbReference>
<dbReference type="RefSeq" id="NP_252153.1">
    <property type="nucleotide sequence ID" value="NC_002516.2"/>
</dbReference>
<dbReference type="RefSeq" id="WP_003091959.1">
    <property type="nucleotide sequence ID" value="NZ_QZGE01000037.1"/>
</dbReference>
<dbReference type="PDB" id="1Y0N">
    <property type="method" value="X-ray"/>
    <property type="resolution" value="2.00 A"/>
    <property type="chains" value="A=1-76"/>
</dbReference>
<dbReference type="PDBsum" id="1Y0N"/>
<dbReference type="SMR" id="Q9HYE3"/>
<dbReference type="FunCoup" id="Q9HYE3">
    <property type="interactions" value="19"/>
</dbReference>
<dbReference type="STRING" id="208964.PA3463"/>
<dbReference type="PaxDb" id="208964-PA3463"/>
<dbReference type="DNASU" id="877735"/>
<dbReference type="GeneID" id="877735"/>
<dbReference type="KEGG" id="pae:PA3463"/>
<dbReference type="PATRIC" id="fig|208964.12.peg.3625"/>
<dbReference type="PseudoCAP" id="PA3463"/>
<dbReference type="HOGENOM" id="CLU_186759_2_0_6"/>
<dbReference type="InParanoid" id="Q9HYE3"/>
<dbReference type="OrthoDB" id="6120729at2"/>
<dbReference type="PhylomeDB" id="Q9HYE3"/>
<dbReference type="BioCyc" id="PAER208964:G1FZ6-3531-MONOMER"/>
<dbReference type="EvolutionaryTrace" id="Q9HYE3"/>
<dbReference type="Proteomes" id="UP000002438">
    <property type="component" value="Chromosome"/>
</dbReference>
<dbReference type="Gene3D" id="1.10.10.610">
    <property type="entry name" value="YehU-like"/>
    <property type="match status" value="1"/>
</dbReference>
<dbReference type="HAMAP" id="MF_00690">
    <property type="entry name" value="UPF0270"/>
    <property type="match status" value="1"/>
</dbReference>
<dbReference type="InterPro" id="IPR010648">
    <property type="entry name" value="UPF0270"/>
</dbReference>
<dbReference type="InterPro" id="IPR036685">
    <property type="entry name" value="YehU-like_sf"/>
</dbReference>
<dbReference type="NCBIfam" id="NF001441">
    <property type="entry name" value="PRK00304.1"/>
    <property type="match status" value="1"/>
</dbReference>
<dbReference type="Pfam" id="PF06794">
    <property type="entry name" value="UPF0270"/>
    <property type="match status" value="1"/>
</dbReference>
<dbReference type="PIRSF" id="PIRSF006169">
    <property type="entry name" value="UCP006169"/>
    <property type="match status" value="1"/>
</dbReference>
<dbReference type="SUPFAM" id="SSF118001">
    <property type="entry name" value="YehU-like"/>
    <property type="match status" value="1"/>
</dbReference>
<comment type="similarity">
    <text evidence="1">Belongs to the UPF0270 family.</text>
</comment>
<proteinExistence type="evidence at protein level"/>
<accession>Q9HYE3</accession>
<sequence>MLIPHDLLEADTLNNLLEDFVTREGTDNGDETPLDVRVERARHALRRGEAVILFDPESQQCQLMLRSEVPAELLRD</sequence>
<keyword id="KW-0002">3D-structure</keyword>
<keyword id="KW-1185">Reference proteome</keyword>
<feature type="chain" id="PRO_0000214854" description="UPF0270 protein PA3463">
    <location>
        <begin position="1"/>
        <end position="76"/>
    </location>
</feature>
<feature type="helix" evidence="2">
    <location>
        <begin position="5"/>
        <end position="7"/>
    </location>
</feature>
<feature type="helix" evidence="2">
    <location>
        <begin position="10"/>
        <end position="22"/>
    </location>
</feature>
<feature type="helix" evidence="2">
    <location>
        <begin position="34"/>
        <end position="46"/>
    </location>
</feature>
<feature type="strand" evidence="2">
    <location>
        <begin position="49"/>
        <end position="54"/>
    </location>
</feature>
<feature type="turn" evidence="2">
    <location>
        <begin position="56"/>
        <end position="58"/>
    </location>
</feature>
<feature type="strand" evidence="2">
    <location>
        <begin position="61"/>
        <end position="65"/>
    </location>
</feature>
<feature type="helix" evidence="2">
    <location>
        <begin position="66"/>
        <end position="68"/>
    </location>
</feature>
<feature type="helix" evidence="2">
    <location>
        <begin position="71"/>
        <end position="73"/>
    </location>
</feature>
<protein>
    <recommendedName>
        <fullName evidence="1">UPF0270 protein PA3463</fullName>
    </recommendedName>
</protein>
<gene>
    <name type="ordered locus">PA3463</name>
</gene>